<protein>
    <recommendedName>
        <fullName>Doublesex- and mab-3-related transcription factor 2</fullName>
    </recommendedName>
    <alternativeName>
        <fullName>Doublesex-like 2 protein</fullName>
        <shortName>DSXL-2</shortName>
    </alternativeName>
</protein>
<proteinExistence type="evidence at protein level"/>
<reference key="1">
    <citation type="journal article" date="1999" name="Hum. Mol. Genet.">
        <title>A region of human chromosome 9p required for testis development contains two genes related to known sexual regulators.</title>
        <authorList>
            <person name="Raymond C.S."/>
            <person name="Parker E.D."/>
            <person name="Kettlewell J.R."/>
            <person name="Brown L.G."/>
            <person name="Page D.C."/>
            <person name="Kusz K."/>
            <person name="Jaruzelska J."/>
            <person name="Reinberg Y."/>
            <person name="Flejter W.L."/>
            <person name="Bardwell V.J."/>
            <person name="Hirsch B."/>
            <person name="Zarkower D."/>
        </authorList>
    </citation>
    <scope>NUCLEOTIDE SEQUENCE [MRNA] (ISOFORM 2)</scope>
    <source>
        <tissue>Testis</tissue>
    </source>
</reference>
<reference key="2">
    <citation type="journal article" date="2000" name="Genomics">
        <title>The human doublesex-related gene, DMRT2, is homologous to a gene involved in somitogenesis and encodes a potential bicistronic transcript.</title>
        <authorList>
            <person name="Ottolenghi C."/>
            <person name="Veitia R."/>
            <person name="Barbieri M."/>
            <person name="Fellous M."/>
            <person name="McElreavey K."/>
        </authorList>
    </citation>
    <scope>NUCLEOTIDE SEQUENCE [MRNA] (ISOFORMS 1; 2 AND 3)</scope>
    <source>
        <tissue>Kidney</tissue>
    </source>
</reference>
<reference key="3">
    <citation type="journal article" date="2000" name="Genomics">
        <title>A new submicroscopic deletion that refines the 9p region for sex reversal.</title>
        <authorList>
            <person name="Calvari V."/>
            <person name="Bertini V."/>
            <person name="De Grandi A."/>
            <person name="Peverali G."/>
            <person name="Zuffardi O."/>
            <person name="Ferguson-Smith M."/>
            <person name="Knudtzon J."/>
            <person name="Camerino G."/>
            <person name="Borsani G."/>
            <person name="Guioli S."/>
        </authorList>
    </citation>
    <scope>NUCLEOTIDE SEQUENCE [MRNA] (ISOFORM 2)</scope>
    <source>
        <tissue>Kidney</tissue>
    </source>
</reference>
<reference key="4">
    <citation type="journal article" date="2004" name="Nature">
        <title>DNA sequence and analysis of human chromosome 9.</title>
        <authorList>
            <person name="Humphray S.J."/>
            <person name="Oliver K."/>
            <person name="Hunt A.R."/>
            <person name="Plumb R.W."/>
            <person name="Loveland J.E."/>
            <person name="Howe K.L."/>
            <person name="Andrews T.D."/>
            <person name="Searle S."/>
            <person name="Hunt S.E."/>
            <person name="Scott C.E."/>
            <person name="Jones M.C."/>
            <person name="Ainscough R."/>
            <person name="Almeida J.P."/>
            <person name="Ambrose K.D."/>
            <person name="Ashwell R.I.S."/>
            <person name="Babbage A.K."/>
            <person name="Babbage S."/>
            <person name="Bagguley C.L."/>
            <person name="Bailey J."/>
            <person name="Banerjee R."/>
            <person name="Barker D.J."/>
            <person name="Barlow K.F."/>
            <person name="Bates K."/>
            <person name="Beasley H."/>
            <person name="Beasley O."/>
            <person name="Bird C.P."/>
            <person name="Bray-Allen S."/>
            <person name="Brown A.J."/>
            <person name="Brown J.Y."/>
            <person name="Burford D."/>
            <person name="Burrill W."/>
            <person name="Burton J."/>
            <person name="Carder C."/>
            <person name="Carter N.P."/>
            <person name="Chapman J.C."/>
            <person name="Chen Y."/>
            <person name="Clarke G."/>
            <person name="Clark S.Y."/>
            <person name="Clee C.M."/>
            <person name="Clegg S."/>
            <person name="Collier R.E."/>
            <person name="Corby N."/>
            <person name="Crosier M."/>
            <person name="Cummings A.T."/>
            <person name="Davies J."/>
            <person name="Dhami P."/>
            <person name="Dunn M."/>
            <person name="Dutta I."/>
            <person name="Dyer L.W."/>
            <person name="Earthrowl M.E."/>
            <person name="Faulkner L."/>
            <person name="Fleming C.J."/>
            <person name="Frankish A."/>
            <person name="Frankland J.A."/>
            <person name="French L."/>
            <person name="Fricker D.G."/>
            <person name="Garner P."/>
            <person name="Garnett J."/>
            <person name="Ghori J."/>
            <person name="Gilbert J.G.R."/>
            <person name="Glison C."/>
            <person name="Grafham D.V."/>
            <person name="Gribble S."/>
            <person name="Griffiths C."/>
            <person name="Griffiths-Jones S."/>
            <person name="Grocock R."/>
            <person name="Guy J."/>
            <person name="Hall R.E."/>
            <person name="Hammond S."/>
            <person name="Harley J.L."/>
            <person name="Harrison E.S.I."/>
            <person name="Hart E.A."/>
            <person name="Heath P.D."/>
            <person name="Henderson C.D."/>
            <person name="Hopkins B.L."/>
            <person name="Howard P.J."/>
            <person name="Howden P.J."/>
            <person name="Huckle E."/>
            <person name="Johnson C."/>
            <person name="Johnson D."/>
            <person name="Joy A.A."/>
            <person name="Kay M."/>
            <person name="Keenan S."/>
            <person name="Kershaw J.K."/>
            <person name="Kimberley A.M."/>
            <person name="King A."/>
            <person name="Knights A."/>
            <person name="Laird G.K."/>
            <person name="Langford C."/>
            <person name="Lawlor S."/>
            <person name="Leongamornlert D.A."/>
            <person name="Leversha M."/>
            <person name="Lloyd C."/>
            <person name="Lloyd D.M."/>
            <person name="Lovell J."/>
            <person name="Martin S."/>
            <person name="Mashreghi-Mohammadi M."/>
            <person name="Matthews L."/>
            <person name="McLaren S."/>
            <person name="McLay K.E."/>
            <person name="McMurray A."/>
            <person name="Milne S."/>
            <person name="Nickerson T."/>
            <person name="Nisbett J."/>
            <person name="Nordsiek G."/>
            <person name="Pearce A.V."/>
            <person name="Peck A.I."/>
            <person name="Porter K.M."/>
            <person name="Pandian R."/>
            <person name="Pelan S."/>
            <person name="Phillimore B."/>
            <person name="Povey S."/>
            <person name="Ramsey Y."/>
            <person name="Rand V."/>
            <person name="Scharfe M."/>
            <person name="Sehra H.K."/>
            <person name="Shownkeen R."/>
            <person name="Sims S.K."/>
            <person name="Skuce C.D."/>
            <person name="Smith M."/>
            <person name="Steward C.A."/>
            <person name="Swarbreck D."/>
            <person name="Sycamore N."/>
            <person name="Tester J."/>
            <person name="Thorpe A."/>
            <person name="Tracey A."/>
            <person name="Tromans A."/>
            <person name="Thomas D.W."/>
            <person name="Wall M."/>
            <person name="Wallis J.M."/>
            <person name="West A.P."/>
            <person name="Whitehead S.L."/>
            <person name="Willey D.L."/>
            <person name="Williams S.A."/>
            <person name="Wilming L."/>
            <person name="Wray P.W."/>
            <person name="Young L."/>
            <person name="Ashurst J.L."/>
            <person name="Coulson A."/>
            <person name="Blocker H."/>
            <person name="Durbin R.M."/>
            <person name="Sulston J.E."/>
            <person name="Hubbard T."/>
            <person name="Jackson M.J."/>
            <person name="Bentley D.R."/>
            <person name="Beck S."/>
            <person name="Rogers J."/>
            <person name="Dunham I."/>
        </authorList>
    </citation>
    <scope>NUCLEOTIDE SEQUENCE [LARGE SCALE GENOMIC DNA]</scope>
</reference>
<reference key="5">
    <citation type="submission" date="2005-09" db="EMBL/GenBank/DDBJ databases">
        <authorList>
            <person name="Mural R.J."/>
            <person name="Istrail S."/>
            <person name="Sutton G.G."/>
            <person name="Florea L."/>
            <person name="Halpern A.L."/>
            <person name="Mobarry C.M."/>
            <person name="Lippert R."/>
            <person name="Walenz B."/>
            <person name="Shatkay H."/>
            <person name="Dew I."/>
            <person name="Miller J.R."/>
            <person name="Flanigan M.J."/>
            <person name="Edwards N.J."/>
            <person name="Bolanos R."/>
            <person name="Fasulo D."/>
            <person name="Halldorsson B.V."/>
            <person name="Hannenhalli S."/>
            <person name="Turner R."/>
            <person name="Yooseph S."/>
            <person name="Lu F."/>
            <person name="Nusskern D.R."/>
            <person name="Shue B.C."/>
            <person name="Zheng X.H."/>
            <person name="Zhong F."/>
            <person name="Delcher A.L."/>
            <person name="Huson D.H."/>
            <person name="Kravitz S.A."/>
            <person name="Mouchard L."/>
            <person name="Reinert K."/>
            <person name="Remington K.A."/>
            <person name="Clark A.G."/>
            <person name="Waterman M.S."/>
            <person name="Eichler E.E."/>
            <person name="Adams M.D."/>
            <person name="Hunkapiller M.W."/>
            <person name="Myers E.W."/>
            <person name="Venter J.C."/>
        </authorList>
    </citation>
    <scope>NUCLEOTIDE SEQUENCE [LARGE SCALE GENOMIC DNA]</scope>
</reference>
<reference key="6">
    <citation type="journal article" date="2004" name="Genome Res.">
        <title>The status, quality, and expansion of the NIH full-length cDNA project: the Mammalian Gene Collection (MGC).</title>
        <authorList>
            <consortium name="The MGC Project Team"/>
        </authorList>
    </citation>
    <scope>NUCLEOTIDE SEQUENCE [LARGE SCALE MRNA] (ISOFORM 1)</scope>
    <scope>VARIANT PRO-381</scope>
    <source>
        <tissue>Testis</tissue>
    </source>
</reference>
<gene>
    <name type="primary">DMRT2</name>
    <name type="synonym">DSXL2</name>
</gene>
<comment type="function">
    <text evidence="1">Transcriptional activator that directly regulates early activation of the myogenic determination gene MYF5 by binding in a sequence-specific manner to the early epaxial enhancer element of it. Involved in somitogenesis during embryogenesis and somite development and differentiation into sclerotome and dermomyotome. Required for the initiation and/or maintenance of proper organization of the sclerotome, dermomyotome and myotome (By similarity).</text>
</comment>
<comment type="subunit">
    <text evidence="1">Homodimer.</text>
</comment>
<comment type="interaction">
    <interactant intactId="EBI-18072054">
        <id>Q9Y5R5</id>
    </interactant>
    <interactant intactId="EBI-716006">
        <id>Q9Y5V3</id>
        <label>MAGED1</label>
    </interactant>
    <organismsDiffer>false</organismsDiffer>
    <experiments>3</experiments>
</comment>
<comment type="interaction">
    <interactant intactId="EBI-18072054">
        <id>Q9Y5R5</id>
    </interactant>
    <interactant intactId="EBI-11741437">
        <id>Q08117-2</id>
        <label>TLE5</label>
    </interactant>
    <organismsDiffer>false</organismsDiffer>
    <experiments>3</experiments>
</comment>
<comment type="subcellular location">
    <subcellularLocation>
        <location evidence="2">Nucleus</location>
    </subcellularLocation>
</comment>
<comment type="alternative products">
    <event type="alternative splicing"/>
    <isoform>
        <id>Q9Y5R5-1</id>
        <name>1</name>
        <sequence type="displayed"/>
    </isoform>
    <isoform>
        <id>Q9Y5R5-2</id>
        <name>2</name>
        <sequence type="described" ref="VSP_041248 VSP_041249"/>
    </isoform>
    <isoform>
        <id>Q9Y5R5-3</id>
        <name>3</name>
        <sequence type="described" ref="VSP_041247"/>
    </isoform>
</comment>
<comment type="tissue specificity">
    <text>Expressed in testis, kidney and skeletal muscle.</text>
</comment>
<comment type="miscellaneous">
    <molecule>Isoform 2</molecule>
    <text evidence="8">Produced by DMRT2 bicistronic transcripts (AF284223/AF284224) from non-overlapping reading frame, according to PubMed:10729224.</text>
</comment>
<comment type="miscellaneous">
    <molecule>Isoform 3</molecule>
    <text evidence="8">Produced by DMRT2 bicistronic transcripts (AF284223/AF284224) from non-overlapping reading frame, according to PubMed:10729224.</text>
</comment>
<comment type="similarity">
    <text evidence="8">Belongs to the DMRT family.</text>
</comment>
<organism>
    <name type="scientific">Homo sapiens</name>
    <name type="common">Human</name>
    <dbReference type="NCBI Taxonomy" id="9606"/>
    <lineage>
        <taxon>Eukaryota</taxon>
        <taxon>Metazoa</taxon>
        <taxon>Chordata</taxon>
        <taxon>Craniata</taxon>
        <taxon>Vertebrata</taxon>
        <taxon>Euteleostomi</taxon>
        <taxon>Mammalia</taxon>
        <taxon>Eutheria</taxon>
        <taxon>Euarchontoglires</taxon>
        <taxon>Primates</taxon>
        <taxon>Haplorrhini</taxon>
        <taxon>Catarrhini</taxon>
        <taxon>Hominidae</taxon>
        <taxon>Homo</taxon>
    </lineage>
</organism>
<keyword id="KW-0025">Alternative splicing</keyword>
<keyword id="KW-0238">DNA-binding</keyword>
<keyword id="KW-0479">Metal-binding</keyword>
<keyword id="KW-0539">Nucleus</keyword>
<keyword id="KW-1267">Proteomics identification</keyword>
<keyword id="KW-1185">Reference proteome</keyword>
<keyword id="KW-0804">Transcription</keyword>
<keyword id="KW-0805">Transcription regulation</keyword>
<keyword id="KW-0862">Zinc</keyword>
<evidence type="ECO:0000250" key="1"/>
<evidence type="ECO:0000255" key="2">
    <source>
        <dbReference type="PROSITE-ProRule" id="PRU00070"/>
    </source>
</evidence>
<evidence type="ECO:0000256" key="3">
    <source>
        <dbReference type="SAM" id="MobiDB-lite"/>
    </source>
</evidence>
<evidence type="ECO:0000269" key="4">
    <source>
    </source>
</evidence>
<evidence type="ECO:0000303" key="5">
    <source>
    </source>
</evidence>
<evidence type="ECO:0000303" key="6">
    <source>
    </source>
</evidence>
<evidence type="ECO:0000303" key="7">
    <source>
    </source>
</evidence>
<evidence type="ECO:0000305" key="8"/>
<feature type="chain" id="PRO_0000207048" description="Doublesex- and mab-3-related transcription factor 2">
    <location>
        <begin position="1"/>
        <end position="561"/>
    </location>
</feature>
<feature type="DNA-binding region" description="DM" evidence="2">
    <location>
        <begin position="123"/>
        <end position="170"/>
    </location>
</feature>
<feature type="region of interest" description="Disordered" evidence="3">
    <location>
        <begin position="1"/>
        <end position="119"/>
    </location>
</feature>
<feature type="region of interest" description="Disordered" evidence="3">
    <location>
        <begin position="414"/>
        <end position="435"/>
    </location>
</feature>
<feature type="compositionally biased region" description="Acidic residues" evidence="3">
    <location>
        <begin position="13"/>
        <end position="26"/>
    </location>
</feature>
<feature type="compositionally biased region" description="Pro residues" evidence="3">
    <location>
        <begin position="32"/>
        <end position="42"/>
    </location>
</feature>
<feature type="compositionally biased region" description="Acidic residues" evidence="3">
    <location>
        <begin position="44"/>
        <end position="67"/>
    </location>
</feature>
<feature type="compositionally biased region" description="Low complexity" evidence="3">
    <location>
        <begin position="68"/>
        <end position="84"/>
    </location>
</feature>
<feature type="splice variant" id="VSP_041247" description="In isoform 3." evidence="6">
    <location>
        <begin position="1"/>
        <end position="233"/>
    </location>
</feature>
<feature type="splice variant" id="VSP_041248" description="In isoform 2." evidence="5 6 7">
    <original>GYRPIPAETYVGGTFPL</original>
    <variation>VLLGLFYSYYVYIMNHL</variation>
    <location>
        <begin position="210"/>
        <end position="226"/>
    </location>
</feature>
<feature type="splice variant" id="VSP_041249" description="In isoform 2." evidence="5 6 7">
    <location>
        <begin position="227"/>
        <end position="561"/>
    </location>
</feature>
<feature type="sequence variant" id="VAR_067719" description="In dbSNP:rs3824419." evidence="4">
    <original>A</original>
    <variation>P</variation>
    <location>
        <position position="381"/>
    </location>
</feature>
<feature type="sequence variant" id="VAR_067720" description="In dbSNP:rs17641078.">
    <original>E</original>
    <variation>Q</variation>
    <location>
        <position position="458"/>
    </location>
</feature>
<feature type="sequence conflict" description="In Ref. 2; AAF86292/AAF86294/AAF86295." evidence="8" ref="2">
    <original>A</original>
    <variation>G</variation>
    <location>
        <position position="329"/>
    </location>
</feature>
<feature type="sequence conflict" description="In Ref. 2; AAF86292/AAF86294/AAF86295." evidence="8" ref="2">
    <original>P</original>
    <variation>H</variation>
    <location>
        <position position="372"/>
    </location>
</feature>
<name>DMRT2_HUMAN</name>
<dbReference type="EMBL" id="AF130729">
    <property type="protein sequence ID" value="AAD40475.1"/>
    <property type="molecule type" value="mRNA"/>
</dbReference>
<dbReference type="EMBL" id="AF284223">
    <property type="protein sequence ID" value="AAF86291.1"/>
    <property type="molecule type" value="mRNA"/>
</dbReference>
<dbReference type="EMBL" id="AF284223">
    <property type="protein sequence ID" value="AAF86292.1"/>
    <property type="molecule type" value="mRNA"/>
</dbReference>
<dbReference type="EMBL" id="AF284224">
    <property type="protein sequence ID" value="AAF86293.1"/>
    <property type="molecule type" value="mRNA"/>
</dbReference>
<dbReference type="EMBL" id="AF284224">
    <property type="protein sequence ID" value="AAF86294.1"/>
    <property type="molecule type" value="mRNA"/>
</dbReference>
<dbReference type="EMBL" id="AF284225">
    <property type="protein sequence ID" value="AAF86295.1"/>
    <property type="molecule type" value="mRNA"/>
</dbReference>
<dbReference type="EMBL" id="Y19052">
    <property type="protein sequence ID" value="CAB59891.1"/>
    <property type="molecule type" value="mRNA"/>
</dbReference>
<dbReference type="EMBL" id="AL358976">
    <property type="status" value="NOT_ANNOTATED_CDS"/>
    <property type="molecule type" value="Genomic_DNA"/>
</dbReference>
<dbReference type="EMBL" id="CH471071">
    <property type="protein sequence ID" value="EAW58816.1"/>
    <property type="molecule type" value="Genomic_DNA"/>
</dbReference>
<dbReference type="EMBL" id="BC136493">
    <property type="protein sequence ID" value="AAI36494.1"/>
    <property type="molecule type" value="mRNA"/>
</dbReference>
<dbReference type="CCDS" id="CCDS6444.1">
    <molecule id="Q9Y5R5-1"/>
</dbReference>
<dbReference type="CCDS" id="CCDS6445.1">
    <molecule id="Q9Y5R5-2"/>
</dbReference>
<dbReference type="RefSeq" id="NP_001124337.1">
    <molecule id="Q9Y5R5-2"/>
    <property type="nucleotide sequence ID" value="NM_001130865.3"/>
</dbReference>
<dbReference type="RefSeq" id="NP_001357460.1">
    <molecule id="Q9Y5R5-2"/>
    <property type="nucleotide sequence ID" value="NM_001370531.1"/>
</dbReference>
<dbReference type="RefSeq" id="NP_001357462.1">
    <molecule id="Q9Y5R5-2"/>
    <property type="nucleotide sequence ID" value="NM_001370533.1"/>
</dbReference>
<dbReference type="RefSeq" id="NP_001374486.1">
    <molecule id="Q9Y5R5-2"/>
    <property type="nucleotide sequence ID" value="NM_001387557.1"/>
</dbReference>
<dbReference type="RefSeq" id="NP_001374487.1">
    <molecule id="Q9Y5R5-1"/>
    <property type="nucleotide sequence ID" value="NM_001387558.1"/>
</dbReference>
<dbReference type="RefSeq" id="NP_001374488.1">
    <molecule id="Q9Y5R5-1"/>
    <property type="nucleotide sequence ID" value="NM_001387559.1"/>
</dbReference>
<dbReference type="RefSeq" id="NP_001374489.1">
    <molecule id="Q9Y5R5-3"/>
    <property type="nucleotide sequence ID" value="NM_001387560.1"/>
</dbReference>
<dbReference type="RefSeq" id="NP_006548.1">
    <molecule id="Q9Y5R5-2"/>
    <property type="nucleotide sequence ID" value="NM_006557.7"/>
</dbReference>
<dbReference type="RefSeq" id="NP_870987.2">
    <molecule id="Q9Y5R5-1"/>
    <property type="nucleotide sequence ID" value="NM_181872.6"/>
</dbReference>
<dbReference type="RefSeq" id="XP_011515989.1">
    <property type="nucleotide sequence ID" value="XM_011517687.1"/>
</dbReference>
<dbReference type="RefSeq" id="XP_011515992.1">
    <property type="nucleotide sequence ID" value="XM_011517690.2"/>
</dbReference>
<dbReference type="RefSeq" id="XP_011515996.1">
    <property type="nucleotide sequence ID" value="XM_011517694.2"/>
</dbReference>
<dbReference type="RefSeq" id="XP_016869702.1">
    <property type="nucleotide sequence ID" value="XM_017014213.1"/>
</dbReference>
<dbReference type="RefSeq" id="XP_016869703.1">
    <molecule id="Q9Y5R5-1"/>
    <property type="nucleotide sequence ID" value="XM_017014214.2"/>
</dbReference>
<dbReference type="RefSeq" id="XP_016869704.1">
    <property type="nucleotide sequence ID" value="XM_017014215.1"/>
</dbReference>
<dbReference type="RefSeq" id="XP_016869705.1">
    <property type="nucleotide sequence ID" value="XM_017014216.1"/>
</dbReference>
<dbReference type="RefSeq" id="XP_054217761.1">
    <molecule id="Q9Y5R5-1"/>
    <property type="nucleotide sequence ID" value="XM_054361786.1"/>
</dbReference>
<dbReference type="RefSeq" id="XP_054217762.1">
    <molecule id="Q9Y5R5-1"/>
    <property type="nucleotide sequence ID" value="XM_054361787.1"/>
</dbReference>
<dbReference type="RefSeq" id="XP_054217763.1">
    <molecule id="Q9Y5R5-1"/>
    <property type="nucleotide sequence ID" value="XM_054361788.1"/>
</dbReference>
<dbReference type="RefSeq" id="XP_054217764.1">
    <molecule id="Q9Y5R5-1"/>
    <property type="nucleotide sequence ID" value="XM_054361789.1"/>
</dbReference>
<dbReference type="RefSeq" id="XP_054217765.1">
    <molecule id="Q9Y5R5-2"/>
    <property type="nucleotide sequence ID" value="XM_054361790.1"/>
</dbReference>
<dbReference type="RefSeq" id="XP_054217766.1">
    <molecule id="Q9Y5R5-2"/>
    <property type="nucleotide sequence ID" value="XM_054361791.1"/>
</dbReference>
<dbReference type="SMR" id="Q9Y5R5"/>
<dbReference type="BioGRID" id="115898">
    <property type="interactions" value="4"/>
</dbReference>
<dbReference type="ELM" id="Q9Y5R5"/>
<dbReference type="FunCoup" id="Q9Y5R5">
    <property type="interactions" value="317"/>
</dbReference>
<dbReference type="IntAct" id="Q9Y5R5">
    <property type="interactions" value="2"/>
</dbReference>
<dbReference type="STRING" id="9606.ENSP00000371686"/>
<dbReference type="GlyGen" id="Q9Y5R5">
    <property type="glycosylation" value="1 site, 1 O-linked glycan (1 site)"/>
</dbReference>
<dbReference type="iPTMnet" id="Q9Y5R5"/>
<dbReference type="PhosphoSitePlus" id="Q9Y5R5"/>
<dbReference type="BioMuta" id="DMRT2"/>
<dbReference type="DMDM" id="334302783"/>
<dbReference type="jPOST" id="Q9Y5R5"/>
<dbReference type="MassIVE" id="Q9Y5R5"/>
<dbReference type="PaxDb" id="9606-ENSP00000371686"/>
<dbReference type="PeptideAtlas" id="Q9Y5R5"/>
<dbReference type="ProteomicsDB" id="86482">
    <molecule id="Q9Y5R5-1"/>
</dbReference>
<dbReference type="ProteomicsDB" id="86483">
    <molecule id="Q9Y5R5-2"/>
</dbReference>
<dbReference type="ProteomicsDB" id="86484">
    <molecule id="Q9Y5R5-3"/>
</dbReference>
<dbReference type="Antibodypedia" id="9092">
    <property type="antibodies" value="73 antibodies from 19 providers"/>
</dbReference>
<dbReference type="DNASU" id="10655"/>
<dbReference type="Ensembl" id="ENST00000259622.10">
    <molecule id="Q9Y5R5-2"/>
    <property type="protein sequence ID" value="ENSP00000259622.6"/>
    <property type="gene ID" value="ENSG00000173253.16"/>
</dbReference>
<dbReference type="Ensembl" id="ENST00000358146.7">
    <molecule id="Q9Y5R5-1"/>
    <property type="protein sequence ID" value="ENSP00000350865.2"/>
    <property type="gene ID" value="ENSG00000173253.16"/>
</dbReference>
<dbReference type="Ensembl" id="ENST00000382251.7">
    <molecule id="Q9Y5R5-1"/>
    <property type="protein sequence ID" value="ENSP00000371686.3"/>
    <property type="gene ID" value="ENSG00000173253.16"/>
</dbReference>
<dbReference type="Ensembl" id="ENST00000382255.7">
    <molecule id="Q9Y5R5-2"/>
    <property type="protein sequence ID" value="ENSP00000371690.3"/>
    <property type="gene ID" value="ENSG00000173253.16"/>
</dbReference>
<dbReference type="Ensembl" id="ENST00000412350.6">
    <molecule id="Q9Y5R5-2"/>
    <property type="protein sequence ID" value="ENSP00000397494.2"/>
    <property type="gene ID" value="ENSG00000173253.16"/>
</dbReference>
<dbReference type="Ensembl" id="ENST00000635183.1">
    <molecule id="Q9Y5R5-2"/>
    <property type="protein sequence ID" value="ENSP00000489226.1"/>
    <property type="gene ID" value="ENSG00000173253.16"/>
</dbReference>
<dbReference type="GeneID" id="10655"/>
<dbReference type="KEGG" id="hsa:10655"/>
<dbReference type="MANE-Select" id="ENST00000358146.7">
    <property type="protein sequence ID" value="ENSP00000350865.2"/>
    <property type="RefSeq nucleotide sequence ID" value="NM_181872.6"/>
    <property type="RefSeq protein sequence ID" value="NP_870987.2"/>
</dbReference>
<dbReference type="UCSC" id="uc003zhb.5">
    <molecule id="Q9Y5R5-1"/>
    <property type="organism name" value="human"/>
</dbReference>
<dbReference type="AGR" id="HGNC:2935"/>
<dbReference type="CTD" id="10655"/>
<dbReference type="DisGeNET" id="10655"/>
<dbReference type="GeneCards" id="DMRT2"/>
<dbReference type="HGNC" id="HGNC:2935">
    <property type="gene designation" value="DMRT2"/>
</dbReference>
<dbReference type="HPA" id="ENSG00000173253">
    <property type="expression patterns" value="Group enriched (kidney, lymphoid tissue, parathyroid gland, skeletal muscle)"/>
</dbReference>
<dbReference type="MalaCards" id="DMRT2"/>
<dbReference type="MIM" id="604935">
    <property type="type" value="gene"/>
</dbReference>
<dbReference type="neXtProt" id="NX_Q9Y5R5"/>
<dbReference type="OpenTargets" id="ENSG00000173253"/>
<dbReference type="PharmGKB" id="PA27382"/>
<dbReference type="VEuPathDB" id="HostDB:ENSG00000173253"/>
<dbReference type="eggNOG" id="KOG3815">
    <property type="taxonomic scope" value="Eukaryota"/>
</dbReference>
<dbReference type="GeneTree" id="ENSGT00940000156282"/>
<dbReference type="HOGENOM" id="CLU_1224438_0_0_1"/>
<dbReference type="InParanoid" id="Q9Y5R5"/>
<dbReference type="OMA" id="WDLKGTR"/>
<dbReference type="OrthoDB" id="9420343at2759"/>
<dbReference type="PAN-GO" id="Q9Y5R5">
    <property type="GO annotations" value="5 GO annotations based on evolutionary models"/>
</dbReference>
<dbReference type="PhylomeDB" id="Q9Y5R5"/>
<dbReference type="TreeFam" id="TF317837"/>
<dbReference type="PathwayCommons" id="Q9Y5R5"/>
<dbReference type="SignaLink" id="Q9Y5R5"/>
<dbReference type="BioGRID-ORCS" id="10655">
    <property type="hits" value="12 hits in 1171 CRISPR screens"/>
</dbReference>
<dbReference type="GenomeRNAi" id="10655"/>
<dbReference type="Pharos" id="Q9Y5R5">
    <property type="development level" value="Tbio"/>
</dbReference>
<dbReference type="PRO" id="PR:Q9Y5R5"/>
<dbReference type="Proteomes" id="UP000005640">
    <property type="component" value="Chromosome 9"/>
</dbReference>
<dbReference type="RNAct" id="Q9Y5R5">
    <property type="molecule type" value="protein"/>
</dbReference>
<dbReference type="Bgee" id="ENSG00000173253">
    <property type="expression patterns" value="Expressed in kidney epithelium and 116 other cell types or tissues"/>
</dbReference>
<dbReference type="ExpressionAtlas" id="Q9Y5R5">
    <property type="expression patterns" value="baseline and differential"/>
</dbReference>
<dbReference type="GO" id="GO:0000785">
    <property type="term" value="C:chromatin"/>
    <property type="evidence" value="ECO:0000247"/>
    <property type="project" value="NTNU_SB"/>
</dbReference>
<dbReference type="GO" id="GO:0005634">
    <property type="term" value="C:nucleus"/>
    <property type="evidence" value="ECO:0000318"/>
    <property type="project" value="GO_Central"/>
</dbReference>
<dbReference type="GO" id="GO:0001228">
    <property type="term" value="F:DNA-binding transcription activator activity, RNA polymerase II-specific"/>
    <property type="evidence" value="ECO:0007669"/>
    <property type="project" value="Ensembl"/>
</dbReference>
<dbReference type="GO" id="GO:0000981">
    <property type="term" value="F:DNA-binding transcription factor activity, RNA polymerase II-specific"/>
    <property type="evidence" value="ECO:0000247"/>
    <property type="project" value="NTNU_SB"/>
</dbReference>
<dbReference type="GO" id="GO:0042802">
    <property type="term" value="F:identical protein binding"/>
    <property type="evidence" value="ECO:0007669"/>
    <property type="project" value="Ensembl"/>
</dbReference>
<dbReference type="GO" id="GO:0046872">
    <property type="term" value="F:metal ion binding"/>
    <property type="evidence" value="ECO:0007669"/>
    <property type="project" value="UniProtKB-KW"/>
</dbReference>
<dbReference type="GO" id="GO:0000978">
    <property type="term" value="F:RNA polymerase II cis-regulatory region sequence-specific DNA binding"/>
    <property type="evidence" value="ECO:0000318"/>
    <property type="project" value="GO_Central"/>
</dbReference>
<dbReference type="GO" id="GO:0048706">
    <property type="term" value="P:embryonic skeletal system development"/>
    <property type="evidence" value="ECO:0007669"/>
    <property type="project" value="Ensembl"/>
</dbReference>
<dbReference type="GO" id="GO:0061055">
    <property type="term" value="P:myotome development"/>
    <property type="evidence" value="ECO:0007669"/>
    <property type="project" value="Ensembl"/>
</dbReference>
<dbReference type="GO" id="GO:2000287">
    <property type="term" value="P:positive regulation of myotome development"/>
    <property type="evidence" value="ECO:0007669"/>
    <property type="project" value="Ensembl"/>
</dbReference>
<dbReference type="GO" id="GO:0014807">
    <property type="term" value="P:regulation of somitogenesis"/>
    <property type="evidence" value="ECO:0007669"/>
    <property type="project" value="Ensembl"/>
</dbReference>
<dbReference type="GO" id="GO:0006357">
    <property type="term" value="P:regulation of transcription by RNA polymerase II"/>
    <property type="evidence" value="ECO:0000318"/>
    <property type="project" value="GO_Central"/>
</dbReference>
<dbReference type="GO" id="GO:0007548">
    <property type="term" value="P:sex differentiation"/>
    <property type="evidence" value="ECO:0000318"/>
    <property type="project" value="GO_Central"/>
</dbReference>
<dbReference type="FunFam" id="4.10.1040.10:FF:000001">
    <property type="entry name" value="doublesex- and mab-3-related transcription factor 1"/>
    <property type="match status" value="1"/>
</dbReference>
<dbReference type="Gene3D" id="4.10.1040.10">
    <property type="entry name" value="DM DNA-binding domain"/>
    <property type="match status" value="1"/>
</dbReference>
<dbReference type="InterPro" id="IPR001275">
    <property type="entry name" value="DM_DNA-bd"/>
</dbReference>
<dbReference type="InterPro" id="IPR036407">
    <property type="entry name" value="DM_DNA-bd_sf"/>
</dbReference>
<dbReference type="InterPro" id="IPR026607">
    <property type="entry name" value="DMRT"/>
</dbReference>
<dbReference type="PANTHER" id="PTHR12322">
    <property type="entry name" value="DOUBLESEX AND MAB-3 RELATED TRANSCRIPTION FACTOR DMRT"/>
    <property type="match status" value="1"/>
</dbReference>
<dbReference type="PANTHER" id="PTHR12322:SF122">
    <property type="entry name" value="DOUBLESEX- AND MAB-3-RELATED TRANSCRIPTION FACTOR 2"/>
    <property type="match status" value="1"/>
</dbReference>
<dbReference type="Pfam" id="PF00751">
    <property type="entry name" value="DM"/>
    <property type="match status" value="1"/>
</dbReference>
<dbReference type="SMART" id="SM00301">
    <property type="entry name" value="DM"/>
    <property type="match status" value="1"/>
</dbReference>
<dbReference type="SUPFAM" id="SSF82927">
    <property type="entry name" value="Cysteine-rich DNA binding domain, (DM domain)"/>
    <property type="match status" value="1"/>
</dbReference>
<dbReference type="PROSITE" id="PS40000">
    <property type="entry name" value="DM_1"/>
    <property type="match status" value="1"/>
</dbReference>
<dbReference type="PROSITE" id="PS50809">
    <property type="entry name" value="DM_2"/>
    <property type="match status" value="1"/>
</dbReference>
<sequence length="561" mass="61814">MADPQAGSAAGDWEIDVESLELEEDVCGAPRSTPPGPSPPPADGDCEDDEDDDGVDEDAEEEGDGEEAGASPGMPGQPEQRGGPQPRPPLAPQASPAGTGPRERCTPAGGGAEPRKLSRTPKCARCRNHGVVSCLKGHKRFCRWRDCQCANCLLVVERQRVMAAQVALRRQQATEDKKGLSGKQNNFERKAVYQRQVRAPSLLAKSILEGYRPIPAETYVGGTFPLPPPVSDRMRKRRAFADKELENIMLEREYKEREMLETSQAAALFLPNRMVPGPDYNSYKSAYSPSPVEPPSKDFCNFLPTCLDLTMQYSGSGNMELISSNVSVATTYRQYPLSSRFLVWPKCGPISDTLLYQQCLLNATTSVQALKPGASWDLKGARVQDGLSAEQDMMPSKLEGSLVLPHTPEIQTTRSDLQGHQAVPERSAFSPPRRNFSPIVDTDSLAAQGHVLTKISKENTRHPLPLRHNPFHSLFQQTLTDKSGPELKTPFVKEAFEETPKKHRECLVKDNQKYTFTIDRCAKDLFVAKQVGTKLSVNEPLSFSVESILKRPSSAITRVSQ</sequence>
<accession>Q9Y5R5</accession>
<accession>B1ANC0</accession>
<accession>B9EGJ1</accession>
<accession>Q9NPG6</accession>
<accession>Q9NQR6</accession>